<reference key="1">
    <citation type="patent" date="2002-08-22" number="WO02064764">
        <title>Isoprenoid synthases.</title>
        <authorList>
            <person name="Aharoni A."/>
            <person name="Jongsma M.A."/>
            <person name="Verhoeven H.A."/>
            <person name="Bouwmeester H.J."/>
        </authorList>
    </citation>
    <scope>NUCLEOTIDE SEQUENCE [GENOMIC DNA / MRNA]</scope>
</reference>
<reference key="2">
    <citation type="journal article" date="2004" name="Plant Cell">
        <title>Gain and loss of fruit flavor compounds produced by wild and cultivated strawberry species.</title>
        <authorList>
            <person name="Aharoni A."/>
            <person name="Giri A.P."/>
            <person name="Verstappen F.W."/>
            <person name="Bertea C.M."/>
            <person name="Sevenier R."/>
            <person name="Sun Z."/>
            <person name="Jongsma M.A."/>
            <person name="Schwab W."/>
            <person name="Bouwmeester H.J."/>
        </authorList>
    </citation>
    <scope>NUCLEOTIDE SEQUENCE [GENOMIC DNA / MRNA]</scope>
    <scope>FUNCTION</scope>
    <scope>CATALYTIC ACTIVITY</scope>
    <scope>TISSUE SPECIFICITY</scope>
    <scope>SUBCELLULAR LOCATION</scope>
</reference>
<reference key="3">
    <citation type="journal article" date="1999" name="Plant Mol. Biol.">
        <title>Isolation and characterization of mRNAs differentially expressed during ripening of wild strawberry (Fragaria vesca L.) fruits.</title>
        <authorList>
            <person name="Nam Y.W."/>
            <person name="Tichit L."/>
            <person name="Leperlier M."/>
            <person name="Cuerq B."/>
            <person name="Marty I."/>
            <person name="Lelievre J.M."/>
        </authorList>
    </citation>
    <scope>NUCLEOTIDE SEQUENCE [MRNA] OF 209-556</scope>
    <scope>DEVELOPMENTAL STAGE</scope>
    <scope>TISSUE SPECIFICITY</scope>
</reference>
<sequence>MPVHATPAAESQIISKPEVVRRTANFKPSVWGDRFANYAEDIITQTQMQEQVEELKQVVRKEVFTNAADDSSHQLKLIDEIQRLGVAYHFESEIDQALERIHETYQDIHDGGDLYNVALRFRLLRRHGYNVSCDVFNKFKDTNGDYKKSLVTDLSGMLSFYEAAHLRVHGEKLLEEALVFTTTHLQSASAKSSLLKTQITEAVERPLLKTMERLGARRYMSIYQDEASYSENLLKLAKLDFNVVQCLHKKELSDILRWYKELDFARRMPFARDRIVELFFWIAGIYFEPEYVFGRHILTKLIEITTVMDDMYDAFGTFEELVILTEAIDRWDASCMDQLPDYMQPFYITLLDVIDEVEEELTKQGRSYRIHYAKEIMKNQARLYFAEAIWFHEGCTPKMDGYMRVAASSVGNTMLSVVSLVGMGDIITKFEFEWLTNEPKILRASNTIFRLMDDIAGYKFEKERGHVASSIDCYMNEYGVSEQETIDIFNKRIVDSWKDINEEFLRPTAAPVPVLNRVLNLTRVVDLLYKRGDAFTHVGKLMKDCIAAMFIDPVPL</sequence>
<protein>
    <recommendedName>
        <fullName>(-)-alpha-pinene synthase</fullName>
        <shortName>FvPINS</shortName>
        <ecNumber>4.2.3.119</ecNumber>
    </recommendedName>
</protein>
<keyword id="KW-0963">Cytoplasm</keyword>
<keyword id="KW-0456">Lyase</keyword>
<keyword id="KW-0460">Magnesium</keyword>
<keyword id="KW-0464">Manganese</keyword>
<keyword id="KW-0479">Metal-binding</keyword>
<accession>O23945</accession>
<evidence type="ECO:0000250" key="1"/>
<evidence type="ECO:0000269" key="2">
    <source>
    </source>
</evidence>
<evidence type="ECO:0000269" key="3">
    <source>
    </source>
</evidence>
<evidence type="ECO:0000305" key="4"/>
<feature type="chain" id="PRO_0000407983" description="(-)-alpha-pinene synthase">
    <location>
        <begin position="1"/>
        <end position="556"/>
    </location>
</feature>
<feature type="short sequence motif" description="DDXXD motif">
    <location>
        <begin position="309"/>
        <end position="313"/>
    </location>
</feature>
<feature type="binding site" evidence="1">
    <location>
        <position position="309"/>
    </location>
    <ligand>
        <name>Mg(2+)</name>
        <dbReference type="ChEBI" id="CHEBI:18420"/>
        <label>1</label>
    </ligand>
</feature>
<feature type="binding site" evidence="1">
    <location>
        <position position="309"/>
    </location>
    <ligand>
        <name>Mg(2+)</name>
        <dbReference type="ChEBI" id="CHEBI:18420"/>
        <label>2</label>
    </ligand>
</feature>
<feature type="binding site" evidence="1">
    <location>
        <position position="313"/>
    </location>
    <ligand>
        <name>Mg(2+)</name>
        <dbReference type="ChEBI" id="CHEBI:18420"/>
        <label>1</label>
    </ligand>
</feature>
<feature type="binding site" evidence="1">
    <location>
        <position position="313"/>
    </location>
    <ligand>
        <name>Mg(2+)</name>
        <dbReference type="ChEBI" id="CHEBI:18420"/>
        <label>2</label>
    </ligand>
</feature>
<feature type="binding site" evidence="1">
    <location>
        <position position="453"/>
    </location>
    <ligand>
        <name>Mg(2+)</name>
        <dbReference type="ChEBI" id="CHEBI:18420"/>
        <label>3</label>
    </ligand>
</feature>
<feature type="binding site" evidence="1">
    <location>
        <position position="461"/>
    </location>
    <ligand>
        <name>Mg(2+)</name>
        <dbReference type="ChEBI" id="CHEBI:18420"/>
        <label>3</label>
    </ligand>
</feature>
<feature type="sequence conflict" description="In Ref. 3; CAA04773." evidence="4" ref="3">
    <original>E</original>
    <variation>K</variation>
    <location>
        <position position="303"/>
    </location>
</feature>
<feature type="sequence conflict" description="In Ref. 3; CAA04773." evidence="4" ref="3">
    <original>M</original>
    <variation>I</variation>
    <location>
        <position position="377"/>
    </location>
</feature>
<feature type="sequence conflict" description="In Ref. 3; CAA04773." evidence="4" ref="3">
    <original>I</original>
    <variation>R</variation>
    <location>
        <position position="389"/>
    </location>
</feature>
<proteinExistence type="evidence at protein level"/>
<organism>
    <name type="scientific">Fragaria vesca</name>
    <name type="common">Woodland strawberry</name>
    <name type="synonym">Potentilla vesca</name>
    <dbReference type="NCBI Taxonomy" id="57918"/>
    <lineage>
        <taxon>Eukaryota</taxon>
        <taxon>Viridiplantae</taxon>
        <taxon>Streptophyta</taxon>
        <taxon>Embryophyta</taxon>
        <taxon>Tracheophyta</taxon>
        <taxon>Spermatophyta</taxon>
        <taxon>Magnoliopsida</taxon>
        <taxon>eudicotyledons</taxon>
        <taxon>Gunneridae</taxon>
        <taxon>Pentapetalae</taxon>
        <taxon>rosids</taxon>
        <taxon>fabids</taxon>
        <taxon>Rosales</taxon>
        <taxon>Rosaceae</taxon>
        <taxon>Rosoideae</taxon>
        <taxon>Potentilleae</taxon>
        <taxon>Fragariinae</taxon>
        <taxon>Fragaria</taxon>
    </lineage>
</organism>
<name>PINS_FRAVE</name>
<comment type="function">
    <text evidence="3">Monoterpene synthase catalyzing the production of (-)-alpha-pinene, beta-phellandrene and beta-myrcene as the major products. Unable to use farnesyl diphosphate as substrate. Exclusively expressed in the fruit of wild strawberries. Not detected in cultivated varieties.</text>
</comment>
<comment type="catalytic activity">
    <reaction evidence="3">
        <text>(2E)-geranyl diphosphate = (1S,5S)-alpha-pinene + diphosphate</text>
        <dbReference type="Rhea" id="RHEA:25488"/>
        <dbReference type="ChEBI" id="CHEBI:28660"/>
        <dbReference type="ChEBI" id="CHEBI:33019"/>
        <dbReference type="ChEBI" id="CHEBI:58057"/>
        <dbReference type="EC" id="4.2.3.119"/>
    </reaction>
</comment>
<comment type="cofactor">
    <cofactor evidence="1">
        <name>Mg(2+)</name>
        <dbReference type="ChEBI" id="CHEBI:18420"/>
    </cofactor>
    <cofactor evidence="1">
        <name>Mn(2+)</name>
        <dbReference type="ChEBI" id="CHEBI:29035"/>
    </cofactor>
    <text evidence="1">Binds 3 Mg(2+) or Mn(2+) ions per subunit.</text>
</comment>
<comment type="pathway">
    <text>Secondary metabolite biosynthesis; terpenoid biosynthesis.</text>
</comment>
<comment type="subcellular location">
    <subcellularLocation>
        <location evidence="3">Cytoplasm</location>
        <location evidence="3">Cytosol</location>
    </subcellularLocation>
</comment>
<comment type="tissue specificity">
    <text evidence="2 3">Expressed in ripe fruits and roots. Not detected in vegetative tissues.</text>
</comment>
<comment type="developmental stage">
    <text evidence="2">Expressed during fruit ripening.</text>
</comment>
<comment type="domain">
    <text>The Asp-Asp-Xaa-Xaa-Asp/Glu (DDXXD/E) motif is important for the catalytic activity, presumably through binding to Mg(2+).</text>
</comment>
<comment type="similarity">
    <text evidence="4">Belongs to the terpene synthase family. Tpsa subfamily.</text>
</comment>
<dbReference type="EC" id="4.2.3.119"/>
<dbReference type="EMBL" id="AX529025">
    <property type="protein sequence ID" value="CAD57092.1"/>
    <property type="molecule type" value="Unassigned_DNA"/>
</dbReference>
<dbReference type="EMBL" id="AJ001452">
    <property type="protein sequence ID" value="CAA04773.1"/>
    <property type="molecule type" value="mRNA"/>
</dbReference>
<dbReference type="SMR" id="O23945"/>
<dbReference type="UniPathway" id="UPA00213"/>
<dbReference type="GO" id="GO:0005829">
    <property type="term" value="C:cytosol"/>
    <property type="evidence" value="ECO:0007669"/>
    <property type="project" value="UniProtKB-SubCell"/>
</dbReference>
<dbReference type="GO" id="GO:0000287">
    <property type="term" value="F:magnesium ion binding"/>
    <property type="evidence" value="ECO:0007669"/>
    <property type="project" value="InterPro"/>
</dbReference>
<dbReference type="GO" id="GO:0050550">
    <property type="term" value="F:pinene synthase activity"/>
    <property type="evidence" value="ECO:0007669"/>
    <property type="project" value="UniProtKB-EC"/>
</dbReference>
<dbReference type="GO" id="GO:0016102">
    <property type="term" value="P:diterpenoid biosynthetic process"/>
    <property type="evidence" value="ECO:0007669"/>
    <property type="project" value="InterPro"/>
</dbReference>
<dbReference type="CDD" id="cd00684">
    <property type="entry name" value="Terpene_cyclase_plant_C1"/>
    <property type="match status" value="1"/>
</dbReference>
<dbReference type="FunFam" id="1.10.600.10:FF:000007">
    <property type="entry name" value="Isoprene synthase, chloroplastic"/>
    <property type="match status" value="1"/>
</dbReference>
<dbReference type="FunFam" id="1.50.10.130:FF:000001">
    <property type="entry name" value="Isoprene synthase, chloroplastic"/>
    <property type="match status" value="1"/>
</dbReference>
<dbReference type="Gene3D" id="1.10.600.10">
    <property type="entry name" value="Farnesyl Diphosphate Synthase"/>
    <property type="match status" value="1"/>
</dbReference>
<dbReference type="Gene3D" id="1.50.10.130">
    <property type="entry name" value="Terpene synthase, N-terminal domain"/>
    <property type="match status" value="1"/>
</dbReference>
<dbReference type="InterPro" id="IPR008949">
    <property type="entry name" value="Isoprenoid_synthase_dom_sf"/>
</dbReference>
<dbReference type="InterPro" id="IPR034741">
    <property type="entry name" value="Terpene_cyclase-like_1_C"/>
</dbReference>
<dbReference type="InterPro" id="IPR044814">
    <property type="entry name" value="Terpene_cyclase_plant_C1"/>
</dbReference>
<dbReference type="InterPro" id="IPR001906">
    <property type="entry name" value="Terpene_synth_N"/>
</dbReference>
<dbReference type="InterPro" id="IPR036965">
    <property type="entry name" value="Terpene_synth_N_sf"/>
</dbReference>
<dbReference type="InterPro" id="IPR050148">
    <property type="entry name" value="Terpene_synthase-like"/>
</dbReference>
<dbReference type="InterPro" id="IPR005630">
    <property type="entry name" value="Terpene_synthase_metal-bd"/>
</dbReference>
<dbReference type="InterPro" id="IPR008930">
    <property type="entry name" value="Terpenoid_cyclase/PrenylTrfase"/>
</dbReference>
<dbReference type="PANTHER" id="PTHR31225:SF251">
    <property type="entry name" value="(-)-GERMACRENE D SYNTHASE-LIKE ISOFORM X2"/>
    <property type="match status" value="1"/>
</dbReference>
<dbReference type="PANTHER" id="PTHR31225">
    <property type="entry name" value="OS04G0344100 PROTEIN-RELATED"/>
    <property type="match status" value="1"/>
</dbReference>
<dbReference type="Pfam" id="PF01397">
    <property type="entry name" value="Terpene_synth"/>
    <property type="match status" value="1"/>
</dbReference>
<dbReference type="Pfam" id="PF03936">
    <property type="entry name" value="Terpene_synth_C"/>
    <property type="match status" value="1"/>
</dbReference>
<dbReference type="SFLD" id="SFLDS00005">
    <property type="entry name" value="Isoprenoid_Synthase_Type_I"/>
    <property type="match status" value="1"/>
</dbReference>
<dbReference type="SFLD" id="SFLDG01019">
    <property type="entry name" value="Terpene_Cyclase_Like_1_C_Termi"/>
    <property type="match status" value="1"/>
</dbReference>
<dbReference type="SUPFAM" id="SSF48239">
    <property type="entry name" value="Terpenoid cyclases/Protein prenyltransferases"/>
    <property type="match status" value="1"/>
</dbReference>
<dbReference type="SUPFAM" id="SSF48576">
    <property type="entry name" value="Terpenoid synthases"/>
    <property type="match status" value="1"/>
</dbReference>